<name>DAPD_ACIBY</name>
<organism>
    <name type="scientific">Acinetobacter baumannii (strain AYE)</name>
    <dbReference type="NCBI Taxonomy" id="509173"/>
    <lineage>
        <taxon>Bacteria</taxon>
        <taxon>Pseudomonadati</taxon>
        <taxon>Pseudomonadota</taxon>
        <taxon>Gammaproteobacteria</taxon>
        <taxon>Moraxellales</taxon>
        <taxon>Moraxellaceae</taxon>
        <taxon>Acinetobacter</taxon>
        <taxon>Acinetobacter calcoaceticus/baumannii complex</taxon>
    </lineage>
</organism>
<proteinExistence type="inferred from homology"/>
<feature type="chain" id="PRO_1000134026" description="2,3,4,5-tetrahydropyridine-2,6-dicarboxylate N-succinyltransferase">
    <location>
        <begin position="1"/>
        <end position="273"/>
    </location>
</feature>
<dbReference type="EC" id="2.3.1.117" evidence="1"/>
<dbReference type="EMBL" id="CU459141">
    <property type="protein sequence ID" value="CAM85868.1"/>
    <property type="molecule type" value="Genomic_DNA"/>
</dbReference>
<dbReference type="RefSeq" id="WP_000080867.1">
    <property type="nucleotide sequence ID" value="NZ_JBDGFB010000021.1"/>
</dbReference>
<dbReference type="SMR" id="B0VCW7"/>
<dbReference type="EnsemblBacteria" id="CAM85868">
    <property type="protein sequence ID" value="CAM85868"/>
    <property type="gene ID" value="ABAYE0923"/>
</dbReference>
<dbReference type="GeneID" id="92894847"/>
<dbReference type="KEGG" id="aby:ABAYE0923"/>
<dbReference type="HOGENOM" id="CLU_050859_0_1_6"/>
<dbReference type="UniPathway" id="UPA00034">
    <property type="reaction ID" value="UER00019"/>
</dbReference>
<dbReference type="GO" id="GO:0005737">
    <property type="term" value="C:cytoplasm"/>
    <property type="evidence" value="ECO:0007669"/>
    <property type="project" value="UniProtKB-SubCell"/>
</dbReference>
<dbReference type="GO" id="GO:0008666">
    <property type="term" value="F:2,3,4,5-tetrahydropyridine-2,6-dicarboxylate N-succinyltransferase activity"/>
    <property type="evidence" value="ECO:0007669"/>
    <property type="project" value="UniProtKB-UniRule"/>
</dbReference>
<dbReference type="GO" id="GO:0016779">
    <property type="term" value="F:nucleotidyltransferase activity"/>
    <property type="evidence" value="ECO:0007669"/>
    <property type="project" value="TreeGrafter"/>
</dbReference>
<dbReference type="GO" id="GO:0019877">
    <property type="term" value="P:diaminopimelate biosynthetic process"/>
    <property type="evidence" value="ECO:0007669"/>
    <property type="project" value="UniProtKB-UniRule"/>
</dbReference>
<dbReference type="GO" id="GO:0009089">
    <property type="term" value="P:lysine biosynthetic process via diaminopimelate"/>
    <property type="evidence" value="ECO:0007669"/>
    <property type="project" value="UniProtKB-UniRule"/>
</dbReference>
<dbReference type="CDD" id="cd03350">
    <property type="entry name" value="LbH_THP_succinylT"/>
    <property type="match status" value="1"/>
</dbReference>
<dbReference type="Gene3D" id="2.160.10.10">
    <property type="entry name" value="Hexapeptide repeat proteins"/>
    <property type="match status" value="1"/>
</dbReference>
<dbReference type="Gene3D" id="1.10.166.10">
    <property type="entry name" value="Tetrahydrodipicolinate-N-succinyltransferase, N-terminal domain"/>
    <property type="match status" value="1"/>
</dbReference>
<dbReference type="HAMAP" id="MF_00811">
    <property type="entry name" value="DapD"/>
    <property type="match status" value="1"/>
</dbReference>
<dbReference type="InterPro" id="IPR005664">
    <property type="entry name" value="DapD_Trfase_Hexpep_rpt_fam"/>
</dbReference>
<dbReference type="InterPro" id="IPR001451">
    <property type="entry name" value="Hexapep"/>
</dbReference>
<dbReference type="InterPro" id="IPR018357">
    <property type="entry name" value="Hexapep_transf_CS"/>
</dbReference>
<dbReference type="InterPro" id="IPR023180">
    <property type="entry name" value="THP_succinylTrfase_dom1"/>
</dbReference>
<dbReference type="InterPro" id="IPR037133">
    <property type="entry name" value="THP_succinylTrfase_N_sf"/>
</dbReference>
<dbReference type="InterPro" id="IPR011004">
    <property type="entry name" value="Trimer_LpxA-like_sf"/>
</dbReference>
<dbReference type="NCBIfam" id="TIGR00965">
    <property type="entry name" value="dapD"/>
    <property type="match status" value="1"/>
</dbReference>
<dbReference type="NCBIfam" id="NF008808">
    <property type="entry name" value="PRK11830.1"/>
    <property type="match status" value="1"/>
</dbReference>
<dbReference type="PANTHER" id="PTHR19136:SF52">
    <property type="entry name" value="2,3,4,5-TETRAHYDROPYRIDINE-2,6-DICARBOXYLATE N-SUCCINYLTRANSFERASE"/>
    <property type="match status" value="1"/>
</dbReference>
<dbReference type="PANTHER" id="PTHR19136">
    <property type="entry name" value="MOLYBDENUM COFACTOR GUANYLYLTRANSFERASE"/>
    <property type="match status" value="1"/>
</dbReference>
<dbReference type="Pfam" id="PF14602">
    <property type="entry name" value="Hexapep_2"/>
    <property type="match status" value="1"/>
</dbReference>
<dbReference type="Pfam" id="PF14805">
    <property type="entry name" value="THDPS_N_2"/>
    <property type="match status" value="1"/>
</dbReference>
<dbReference type="SUPFAM" id="SSF51161">
    <property type="entry name" value="Trimeric LpxA-like enzymes"/>
    <property type="match status" value="1"/>
</dbReference>
<dbReference type="PROSITE" id="PS00101">
    <property type="entry name" value="HEXAPEP_TRANSFERASES"/>
    <property type="match status" value="1"/>
</dbReference>
<comment type="catalytic activity">
    <reaction evidence="1">
        <text>(S)-2,3,4,5-tetrahydrodipicolinate + succinyl-CoA + H2O = (S)-2-succinylamino-6-oxoheptanedioate + CoA</text>
        <dbReference type="Rhea" id="RHEA:17325"/>
        <dbReference type="ChEBI" id="CHEBI:15377"/>
        <dbReference type="ChEBI" id="CHEBI:15685"/>
        <dbReference type="ChEBI" id="CHEBI:16845"/>
        <dbReference type="ChEBI" id="CHEBI:57287"/>
        <dbReference type="ChEBI" id="CHEBI:57292"/>
        <dbReference type="EC" id="2.3.1.117"/>
    </reaction>
</comment>
<comment type="pathway">
    <text evidence="1">Amino-acid biosynthesis; L-lysine biosynthesis via DAP pathway; LL-2,6-diaminopimelate from (S)-tetrahydrodipicolinate (succinylase route): step 1/3.</text>
</comment>
<comment type="subcellular location">
    <subcellularLocation>
        <location evidence="1">Cytoplasm</location>
    </subcellularLocation>
</comment>
<comment type="similarity">
    <text evidence="1">Belongs to the transferase hexapeptide repeat family.</text>
</comment>
<accession>B0VCW7</accession>
<protein>
    <recommendedName>
        <fullName evidence="1">2,3,4,5-tetrahydropyridine-2,6-dicarboxylate N-succinyltransferase</fullName>
        <ecNumber evidence="1">2.3.1.117</ecNumber>
    </recommendedName>
    <alternativeName>
        <fullName evidence="1">Tetrahydrodipicolinate N-succinyltransferase</fullName>
        <shortName evidence="1">THP succinyltransferase</shortName>
        <shortName evidence="1">Tetrahydropicolinate succinylase</shortName>
    </alternativeName>
</protein>
<sequence>MSQLSTIIEQAFEDRANFTAADCPSEIRQAVEEAIAGLDNGTLRVAEKINGEWVVHQWLKKAVLLSFKLNDNKPIESCDLRFYDKVETKFSGWTEEQFKAAGVRVVPPAVARRGSFQAKNVVLMPSYVNIGAYVDEGTMVDTWATVGSCAQIGKNVHLSGGVGIGGVLEPLQANPTIIEDNCFIGARSEIVEGVIVEEGSVISMGVYIGQSTRIYDRETGEIHYGRVPAGSVVVPGNLPSADGKYSLYAAIIVKKVDAQTRAKTSLNDLLRAD</sequence>
<evidence type="ECO:0000255" key="1">
    <source>
        <dbReference type="HAMAP-Rule" id="MF_00811"/>
    </source>
</evidence>
<reference key="1">
    <citation type="journal article" date="2008" name="PLoS ONE">
        <title>Comparative analysis of Acinetobacters: three genomes for three lifestyles.</title>
        <authorList>
            <person name="Vallenet D."/>
            <person name="Nordmann P."/>
            <person name="Barbe V."/>
            <person name="Poirel L."/>
            <person name="Mangenot S."/>
            <person name="Bataille E."/>
            <person name="Dossat C."/>
            <person name="Gas S."/>
            <person name="Kreimeyer A."/>
            <person name="Lenoble P."/>
            <person name="Oztas S."/>
            <person name="Poulain J."/>
            <person name="Segurens B."/>
            <person name="Robert C."/>
            <person name="Abergel C."/>
            <person name="Claverie J.-M."/>
            <person name="Raoult D."/>
            <person name="Medigue C."/>
            <person name="Weissenbach J."/>
            <person name="Cruveiller S."/>
        </authorList>
    </citation>
    <scope>NUCLEOTIDE SEQUENCE [LARGE SCALE GENOMIC DNA]</scope>
    <source>
        <strain>AYE</strain>
    </source>
</reference>
<gene>
    <name evidence="1" type="primary">dapD</name>
    <name type="ordered locus">ABAYE0923</name>
</gene>
<keyword id="KW-0012">Acyltransferase</keyword>
<keyword id="KW-0028">Amino-acid biosynthesis</keyword>
<keyword id="KW-0963">Cytoplasm</keyword>
<keyword id="KW-0220">Diaminopimelate biosynthesis</keyword>
<keyword id="KW-0457">Lysine biosynthesis</keyword>
<keyword id="KW-0677">Repeat</keyword>
<keyword id="KW-0808">Transferase</keyword>